<organismHost>
    <name type="scientific">Ornithodoros</name>
    <name type="common">relapsing fever ticks</name>
    <dbReference type="NCBI Taxonomy" id="6937"/>
</organismHost>
<organismHost>
    <name type="scientific">Phacochoerus aethiopicus</name>
    <name type="common">Warthog</name>
    <dbReference type="NCBI Taxonomy" id="85517"/>
</organismHost>
<organismHost>
    <name type="scientific">Phacochoerus africanus</name>
    <name type="common">Warthog</name>
    <dbReference type="NCBI Taxonomy" id="41426"/>
</organismHost>
<organismHost>
    <name type="scientific">Potamochoerus larvatus</name>
    <name type="common">Bushpig</name>
    <dbReference type="NCBI Taxonomy" id="273792"/>
</organismHost>
<organismHost>
    <name type="scientific">Sus scrofa</name>
    <name type="common">Pig</name>
    <dbReference type="NCBI Taxonomy" id="9823"/>
</organismHost>
<keyword id="KW-0240">DNA-directed RNA polymerase</keyword>
<keyword id="KW-0244">Early protein</keyword>
<keyword id="KW-1035">Host cytoplasm</keyword>
<keyword id="KW-0804">Transcription</keyword>
<keyword id="KW-1195">Viral transcription</keyword>
<keyword id="KW-0946">Virion</keyword>
<proteinExistence type="inferred from homology"/>
<protein>
    <recommendedName>
        <fullName evidence="2">DNA-directed RNA polymerase RPB3-11 homolog</fullName>
        <shortName evidence="3">RPB3-11 homolog</shortName>
    </recommendedName>
</protein>
<name>RPB3_ASFP4</name>
<comment type="function">
    <text evidence="1">Component of the DNA-directed RNA polymerase (RNAP) that catalyzes the transcription in the cytoplasm of viral DNA into RNA using the four ribonucleoside triphosphates as substrates.</text>
</comment>
<comment type="subunit">
    <text evidence="2">Part of the viral DNA-directed RNA polymerase that consists of 8 polII-like subunits (RPB1, RPB2, RPB3, RPB5, RPB6, RPB7, RPB9, RPB10), a capping enzyme and a termination factor.</text>
</comment>
<comment type="subcellular location">
    <subcellularLocation>
        <location evidence="3">Host cytoplasm</location>
    </subcellularLocation>
    <subcellularLocation>
        <location evidence="2">Virion</location>
    </subcellularLocation>
    <text evidence="2">Found in association with viral nucleoid.</text>
</comment>
<comment type="induction">
    <text evidence="3">Expressed in the early phase of the viral replicative cycle.</text>
</comment>
<comment type="similarity">
    <text evidence="3">In the N-terminal section; belongs to the archaeal RpoD/eukaryotic RPB3 RNA polymerase subunit family.</text>
</comment>
<comment type="similarity">
    <text evidence="3">In the C-terminal section; belongs to the archaeal RpoL/eukaryotic RPB11/RPC19 RNA polymerase subunit family.</text>
</comment>
<gene>
    <name type="ordered locus">Pret-125</name>
</gene>
<feature type="chain" id="PRO_0000373166" description="DNA-directed RNA polymerase RPB3-11 homolog">
    <location>
        <begin position="1"/>
        <end position="359"/>
    </location>
</feature>
<evidence type="ECO:0000250" key="1">
    <source>
        <dbReference type="UniProtKB" id="P19387"/>
    </source>
</evidence>
<evidence type="ECO:0000250" key="2">
    <source>
        <dbReference type="UniProtKB" id="Q65184"/>
    </source>
</evidence>
<evidence type="ECO:0000305" key="3"/>
<organism>
    <name type="scientific">African swine fever virus (isolate Tick/South Africa/Pretoriuskop Pr4/1996)</name>
    <name type="common">ASFV</name>
    <dbReference type="NCBI Taxonomy" id="561443"/>
    <lineage>
        <taxon>Viruses</taxon>
        <taxon>Varidnaviria</taxon>
        <taxon>Bamfordvirae</taxon>
        <taxon>Nucleocytoviricota</taxon>
        <taxon>Pokkesviricetes</taxon>
        <taxon>Asfuvirales</taxon>
        <taxon>Asfarviridae</taxon>
        <taxon>Asfivirus</taxon>
        <taxon>African swine fever virus</taxon>
    </lineage>
</organism>
<dbReference type="EMBL" id="AY261363">
    <property type="status" value="NOT_ANNOTATED_CDS"/>
    <property type="molecule type" value="Genomic_DNA"/>
</dbReference>
<dbReference type="SMR" id="P0C9E6"/>
<dbReference type="Proteomes" id="UP000000859">
    <property type="component" value="Segment"/>
</dbReference>
<dbReference type="GO" id="GO:0000428">
    <property type="term" value="C:DNA-directed RNA polymerase complex"/>
    <property type="evidence" value="ECO:0007669"/>
    <property type="project" value="UniProtKB-KW"/>
</dbReference>
<dbReference type="GO" id="GO:0030430">
    <property type="term" value="C:host cell cytoplasm"/>
    <property type="evidence" value="ECO:0007669"/>
    <property type="project" value="UniProtKB-SubCell"/>
</dbReference>
<dbReference type="GO" id="GO:0044423">
    <property type="term" value="C:virion component"/>
    <property type="evidence" value="ECO:0007669"/>
    <property type="project" value="UniProtKB-KW"/>
</dbReference>
<dbReference type="GO" id="GO:0046983">
    <property type="term" value="F:protein dimerization activity"/>
    <property type="evidence" value="ECO:0007669"/>
    <property type="project" value="InterPro"/>
</dbReference>
<dbReference type="GO" id="GO:0006351">
    <property type="term" value="P:DNA-templated transcription"/>
    <property type="evidence" value="ECO:0007669"/>
    <property type="project" value="InterPro"/>
</dbReference>
<dbReference type="GO" id="GO:0019083">
    <property type="term" value="P:viral transcription"/>
    <property type="evidence" value="ECO:0007669"/>
    <property type="project" value="UniProtKB-KW"/>
</dbReference>
<dbReference type="Gene3D" id="3.30.1360.10">
    <property type="entry name" value="RNA polymerase, RBP11-like subunit"/>
    <property type="match status" value="1"/>
</dbReference>
<dbReference type="InterPro" id="IPR036603">
    <property type="entry name" value="RBP11-like"/>
</dbReference>
<dbReference type="InterPro" id="IPR009025">
    <property type="entry name" value="RBP11-like_dimer"/>
</dbReference>
<dbReference type="InterPro" id="IPR036643">
    <property type="entry name" value="RNApol_insert_sf"/>
</dbReference>
<dbReference type="Pfam" id="PF13656">
    <property type="entry name" value="RNA_pol_L_2"/>
    <property type="match status" value="1"/>
</dbReference>
<dbReference type="SUPFAM" id="SSF56553">
    <property type="entry name" value="Insert subdomain of RNA polymerase alpha subunit"/>
    <property type="match status" value="1"/>
</dbReference>
<dbReference type="SUPFAM" id="SSF55257">
    <property type="entry name" value="RBP11-like subunits of RNA polymerase"/>
    <property type="match status" value="1"/>
</dbReference>
<sequence>MEKIFQNVEIKPFLIDFSNPFIKNAAKRLFQLEEQLPLVPVNVVMDFKGINRAAVHGLSRVLQDEIPNYMLDIKPGGYKIEDSTDLFMTEQFIRNRINFIPIYAKNETLVFALRSLNNSCEVKTIYSRDLIQVAGPKLKYPIFNPTFEIGFLQPGKSLIIEDIYIKRGIGRKHAAFNLAVKTHFSHLDIEQYPTDKKEYMALSGYKQSSMTSDPRHHRLGLCFPAVPLPHINQAVRTYLKNACRVIIGRIQSIQKIYENFEEPQPELVLFSMDEEKTKAIITIKDETHTIGNLLKTYIYEMIPDISFVGYQCVPHKQEMVLTIIHKASQEDLITLLEKSIQNIIQTFQILEKNVDELIA</sequence>
<accession>P0C9E6</accession>
<reference key="1">
    <citation type="submission" date="2003-03" db="EMBL/GenBank/DDBJ databases">
        <title>African swine fever virus genomes.</title>
        <authorList>
            <person name="Kutish G.F."/>
            <person name="Rock D.L."/>
        </authorList>
    </citation>
    <scope>NUCLEOTIDE SEQUENCE [GENOMIC DNA]</scope>
</reference>